<gene>
    <name evidence="1" type="primary">cmk</name>
    <name type="ordered locus">NMB1300</name>
</gene>
<protein>
    <recommendedName>
        <fullName evidence="1">Cytidylate kinase</fullName>
        <shortName evidence="1">CK</shortName>
        <ecNumber evidence="1">2.7.4.25</ecNumber>
    </recommendedName>
    <alternativeName>
        <fullName evidence="1">Cytidine monophosphate kinase</fullName>
        <shortName evidence="1">CMP kinase</shortName>
    </alternativeName>
</protein>
<dbReference type="EC" id="2.7.4.25" evidence="1"/>
<dbReference type="EMBL" id="AE002098">
    <property type="protein sequence ID" value="AAF41675.1"/>
    <property type="molecule type" value="Genomic_DNA"/>
</dbReference>
<dbReference type="PIR" id="F81099">
    <property type="entry name" value="F81099"/>
</dbReference>
<dbReference type="RefSeq" id="NP_274319.1">
    <property type="nucleotide sequence ID" value="NC_003112.2"/>
</dbReference>
<dbReference type="RefSeq" id="WP_002224491.1">
    <property type="nucleotide sequence ID" value="NC_003112.2"/>
</dbReference>
<dbReference type="SMR" id="P57065"/>
<dbReference type="FunCoup" id="P57065">
    <property type="interactions" value="335"/>
</dbReference>
<dbReference type="STRING" id="122586.NMB1300"/>
<dbReference type="PaxDb" id="122586-NMB1300"/>
<dbReference type="KEGG" id="nme:NMB1300"/>
<dbReference type="PATRIC" id="fig|122586.8.peg.1632"/>
<dbReference type="HOGENOM" id="CLU_079959_2_0_4"/>
<dbReference type="InParanoid" id="P57065"/>
<dbReference type="OrthoDB" id="9807434at2"/>
<dbReference type="Proteomes" id="UP000000425">
    <property type="component" value="Chromosome"/>
</dbReference>
<dbReference type="GO" id="GO:0005829">
    <property type="term" value="C:cytosol"/>
    <property type="evidence" value="ECO:0000318"/>
    <property type="project" value="GO_Central"/>
</dbReference>
<dbReference type="GO" id="GO:0004127">
    <property type="term" value="F:(d)CMP kinase activity"/>
    <property type="evidence" value="ECO:0000318"/>
    <property type="project" value="GO_Central"/>
</dbReference>
<dbReference type="GO" id="GO:0005524">
    <property type="term" value="F:ATP binding"/>
    <property type="evidence" value="ECO:0007669"/>
    <property type="project" value="UniProtKB-UniRule"/>
</dbReference>
<dbReference type="GO" id="GO:0036430">
    <property type="term" value="F:CMP kinase activity"/>
    <property type="evidence" value="ECO:0007669"/>
    <property type="project" value="RHEA"/>
</dbReference>
<dbReference type="GO" id="GO:0036431">
    <property type="term" value="F:dCMP kinase activity"/>
    <property type="evidence" value="ECO:0007669"/>
    <property type="project" value="RHEA"/>
</dbReference>
<dbReference type="GO" id="GO:0015949">
    <property type="term" value="P:nucleobase-containing small molecule interconversion"/>
    <property type="evidence" value="ECO:0000318"/>
    <property type="project" value="GO_Central"/>
</dbReference>
<dbReference type="GO" id="GO:0006220">
    <property type="term" value="P:pyrimidine nucleotide metabolic process"/>
    <property type="evidence" value="ECO:0007669"/>
    <property type="project" value="UniProtKB-UniRule"/>
</dbReference>
<dbReference type="CDD" id="cd02020">
    <property type="entry name" value="CMPK"/>
    <property type="match status" value="1"/>
</dbReference>
<dbReference type="FunFam" id="3.40.50.300:FF:002405">
    <property type="entry name" value="Cytidylate kinase"/>
    <property type="match status" value="1"/>
</dbReference>
<dbReference type="Gene3D" id="3.40.50.300">
    <property type="entry name" value="P-loop containing nucleotide triphosphate hydrolases"/>
    <property type="match status" value="1"/>
</dbReference>
<dbReference type="HAMAP" id="MF_00238">
    <property type="entry name" value="Cytidyl_kinase_type1"/>
    <property type="match status" value="1"/>
</dbReference>
<dbReference type="InterPro" id="IPR003136">
    <property type="entry name" value="Cytidylate_kin"/>
</dbReference>
<dbReference type="InterPro" id="IPR011994">
    <property type="entry name" value="Cytidylate_kinase_dom"/>
</dbReference>
<dbReference type="InterPro" id="IPR027417">
    <property type="entry name" value="P-loop_NTPase"/>
</dbReference>
<dbReference type="NCBIfam" id="TIGR00017">
    <property type="entry name" value="cmk"/>
    <property type="match status" value="1"/>
</dbReference>
<dbReference type="PANTHER" id="PTHR21299:SF2">
    <property type="entry name" value="CYTIDYLATE KINASE"/>
    <property type="match status" value="1"/>
</dbReference>
<dbReference type="PANTHER" id="PTHR21299">
    <property type="entry name" value="CYTIDYLATE KINASE/PANTOATE-BETA-ALANINE LIGASE"/>
    <property type="match status" value="1"/>
</dbReference>
<dbReference type="Pfam" id="PF02224">
    <property type="entry name" value="Cytidylate_kin"/>
    <property type="match status" value="1"/>
</dbReference>
<dbReference type="SUPFAM" id="SSF52540">
    <property type="entry name" value="P-loop containing nucleoside triphosphate hydrolases"/>
    <property type="match status" value="1"/>
</dbReference>
<accession>P57065</accession>
<evidence type="ECO:0000255" key="1">
    <source>
        <dbReference type="HAMAP-Rule" id="MF_00238"/>
    </source>
</evidence>
<keyword id="KW-0067">ATP-binding</keyword>
<keyword id="KW-0963">Cytoplasm</keyword>
<keyword id="KW-0418">Kinase</keyword>
<keyword id="KW-0547">Nucleotide-binding</keyword>
<keyword id="KW-1185">Reference proteome</keyword>
<keyword id="KW-0808">Transferase</keyword>
<comment type="catalytic activity">
    <reaction evidence="1">
        <text>CMP + ATP = CDP + ADP</text>
        <dbReference type="Rhea" id="RHEA:11600"/>
        <dbReference type="ChEBI" id="CHEBI:30616"/>
        <dbReference type="ChEBI" id="CHEBI:58069"/>
        <dbReference type="ChEBI" id="CHEBI:60377"/>
        <dbReference type="ChEBI" id="CHEBI:456216"/>
        <dbReference type="EC" id="2.7.4.25"/>
    </reaction>
</comment>
<comment type="catalytic activity">
    <reaction evidence="1">
        <text>dCMP + ATP = dCDP + ADP</text>
        <dbReference type="Rhea" id="RHEA:25094"/>
        <dbReference type="ChEBI" id="CHEBI:30616"/>
        <dbReference type="ChEBI" id="CHEBI:57566"/>
        <dbReference type="ChEBI" id="CHEBI:58593"/>
        <dbReference type="ChEBI" id="CHEBI:456216"/>
        <dbReference type="EC" id="2.7.4.25"/>
    </reaction>
</comment>
<comment type="subcellular location">
    <subcellularLocation>
        <location evidence="1">Cytoplasm</location>
    </subcellularLocation>
</comment>
<comment type="similarity">
    <text evidence="1">Belongs to the cytidylate kinase family. Type 1 subfamily.</text>
</comment>
<reference key="1">
    <citation type="journal article" date="2000" name="Science">
        <title>Complete genome sequence of Neisseria meningitidis serogroup B strain MC58.</title>
        <authorList>
            <person name="Tettelin H."/>
            <person name="Saunders N.J."/>
            <person name="Heidelberg J.F."/>
            <person name="Jeffries A.C."/>
            <person name="Nelson K.E."/>
            <person name="Eisen J.A."/>
            <person name="Ketchum K.A."/>
            <person name="Hood D.W."/>
            <person name="Peden J.F."/>
            <person name="Dodson R.J."/>
            <person name="Nelson W.C."/>
            <person name="Gwinn M.L."/>
            <person name="DeBoy R.T."/>
            <person name="Peterson J.D."/>
            <person name="Hickey E.K."/>
            <person name="Haft D.H."/>
            <person name="Salzberg S.L."/>
            <person name="White O."/>
            <person name="Fleischmann R.D."/>
            <person name="Dougherty B.A."/>
            <person name="Mason T.M."/>
            <person name="Ciecko A."/>
            <person name="Parksey D.S."/>
            <person name="Blair E."/>
            <person name="Cittone H."/>
            <person name="Clark E.B."/>
            <person name="Cotton M.D."/>
            <person name="Utterback T.R."/>
            <person name="Khouri H.M."/>
            <person name="Qin H."/>
            <person name="Vamathevan J.J."/>
            <person name="Gill J."/>
            <person name="Scarlato V."/>
            <person name="Masignani V."/>
            <person name="Pizza M."/>
            <person name="Grandi G."/>
            <person name="Sun L."/>
            <person name="Smith H.O."/>
            <person name="Fraser C.M."/>
            <person name="Moxon E.R."/>
            <person name="Rappuoli R."/>
            <person name="Venter J.C."/>
        </authorList>
    </citation>
    <scope>NUCLEOTIDE SEQUENCE [LARGE SCALE GENOMIC DNA]</scope>
    <source>
        <strain>ATCC BAA-335 / MC58</strain>
    </source>
</reference>
<proteinExistence type="inferred from homology"/>
<organism>
    <name type="scientific">Neisseria meningitidis serogroup B (strain ATCC BAA-335 / MC58)</name>
    <dbReference type="NCBI Taxonomy" id="122586"/>
    <lineage>
        <taxon>Bacteria</taxon>
        <taxon>Pseudomonadati</taxon>
        <taxon>Pseudomonadota</taxon>
        <taxon>Betaproteobacteria</taxon>
        <taxon>Neisseriales</taxon>
        <taxon>Neisseriaceae</taxon>
        <taxon>Neisseria</taxon>
    </lineage>
</organism>
<sequence length="218" mass="23762">MNRQKVIAIDGPGASGKGTVAARVAAALGYDYLDTGALYRLTALYAQKQGVGWHDEENVSELAKKLPAVFSGSRILLGGEDVSDGIRTEAIGMGASAVAQLPKVRAALLQRQRDFLTEKGLVADGRDTGSVVFPQAELKIFLTAESKIRAERRAKQIGIPCEGLAFERILSDIEARDEADRNRKVAPLKQQPDALLLDTSRLTIEETVKKVLDWYREV</sequence>
<feature type="chain" id="PRO_0000131945" description="Cytidylate kinase">
    <location>
        <begin position="1"/>
        <end position="218"/>
    </location>
</feature>
<feature type="binding site" evidence="1">
    <location>
        <begin position="11"/>
        <end position="19"/>
    </location>
    <ligand>
        <name>ATP</name>
        <dbReference type="ChEBI" id="CHEBI:30616"/>
    </ligand>
</feature>
<name>KCY_NEIMB</name>